<feature type="chain" id="PRO_0000084123" description="Alpha-amylase inhibitor AAI">
    <location>
        <begin position="1"/>
        <end position="32"/>
    </location>
</feature>
<feature type="disulfide bond" evidence="1">
    <location>
        <begin position="1"/>
        <end position="18"/>
    </location>
</feature>
<feature type="disulfide bond" evidence="1">
    <location>
        <begin position="8"/>
        <end position="23"/>
    </location>
</feature>
<feature type="disulfide bond" evidence="1">
    <location>
        <begin position="17"/>
        <end position="31"/>
    </location>
</feature>
<feature type="strand" evidence="2">
    <location>
        <begin position="6"/>
        <end position="8"/>
    </location>
</feature>
<feature type="helix" evidence="2">
    <location>
        <begin position="10"/>
        <end position="13"/>
    </location>
</feature>
<feature type="strand" evidence="2">
    <location>
        <begin position="26"/>
        <end position="31"/>
    </location>
</feature>
<reference key="1">
    <citation type="journal article" date="1994" name="J. Biol. Chem.">
        <title>A novel alpha-amylase inhibitor from amaranth (Amaranthus hypocondriacus) seeds.</title>
        <authorList>
            <person name="Chagolla-Lopez A."/>
            <person name="Blanco-Labra A."/>
            <person name="Patthy A."/>
            <person name="Sanchez R."/>
            <person name="Pongor S."/>
        </authorList>
    </citation>
    <scope>PROTEIN SEQUENCE</scope>
    <scope>DISULFIDE BONDS</scope>
    <source>
        <tissue>Seed</tissue>
    </source>
</reference>
<reference key="2">
    <citation type="journal article" date="1999" name="J. Biol. Chem.">
        <title>Solution structure of the major alpha-amylase inhibitor of the crop plant amaranth.</title>
        <authorList>
            <person name="Lu S."/>
            <person name="Deng P."/>
            <person name="Liu X."/>
            <person name="Luo J."/>
            <person name="Han R."/>
            <person name="Gu X."/>
            <person name="Liang S."/>
            <person name="Wang X."/>
            <person name="Li F."/>
            <person name="Lozanov V."/>
            <person name="Patthy A."/>
            <person name="Pongor S."/>
        </authorList>
    </citation>
    <scope>STRUCTURE BY NMR</scope>
    <scope>REVISION OF DISULFIDE BONDS</scope>
    <source>
        <tissue>Seed</tissue>
    </source>
</reference>
<name>IAAI_AMAHP</name>
<proteinExistence type="evidence at protein level"/>
<accession>P80403</accession>
<dbReference type="PIR" id="A54845">
    <property type="entry name" value="A54845"/>
</dbReference>
<dbReference type="PDB" id="1CLV">
    <property type="method" value="X-ray"/>
    <property type="resolution" value="2.00 A"/>
    <property type="chains" value="I=1-32"/>
</dbReference>
<dbReference type="PDB" id="1HTX">
    <property type="method" value="NMR"/>
    <property type="chains" value="A=1-32"/>
</dbReference>
<dbReference type="PDB" id="1QFD">
    <property type="method" value="NMR"/>
    <property type="chains" value="A=1-32"/>
</dbReference>
<dbReference type="PDBsum" id="1CLV"/>
<dbReference type="PDBsum" id="1HTX"/>
<dbReference type="PDBsum" id="1QFD"/>
<dbReference type="BMRB" id="P80403"/>
<dbReference type="SMR" id="P80403"/>
<dbReference type="MINT" id="P80403"/>
<dbReference type="EvolutionaryTrace" id="P80403"/>
<dbReference type="GO" id="GO:0015066">
    <property type="term" value="F:alpha-amylase inhibitor activity"/>
    <property type="evidence" value="ECO:0007669"/>
    <property type="project" value="UniProtKB-KW"/>
</dbReference>
<dbReference type="GO" id="GO:0004866">
    <property type="term" value="F:endopeptidase inhibitor activity"/>
    <property type="evidence" value="ECO:0007669"/>
    <property type="project" value="InterPro"/>
</dbReference>
<dbReference type="InterPro" id="IPR011052">
    <property type="entry name" value="Proteinase_amylase_inhib_sf"/>
</dbReference>
<dbReference type="SUPFAM" id="SSF57027">
    <property type="entry name" value="Plant inhibitors of proteinases and amylases"/>
    <property type="match status" value="1"/>
</dbReference>
<comment type="function">
    <text>Alpha-amylase inhibitor. It is active against alpha-amylases from Tribolium castaneum and Prostephanus truncatus larvae.</text>
</comment>
<comment type="tissue specificity">
    <text>Endosperm.</text>
</comment>
<comment type="domain">
    <text>The presence of a 'disulfide through disulfide knot' structurally defines this protein as a knottin.</text>
</comment>
<organism>
    <name type="scientific">Amaranthus hypochondriacus</name>
    <name type="common">Prince-of-Wales feather</name>
    <name type="synonym">Amaranthus hybridus var. hypochondriacus</name>
    <dbReference type="NCBI Taxonomy" id="28502"/>
    <lineage>
        <taxon>Eukaryota</taxon>
        <taxon>Viridiplantae</taxon>
        <taxon>Streptophyta</taxon>
        <taxon>Embryophyta</taxon>
        <taxon>Tracheophyta</taxon>
        <taxon>Spermatophyta</taxon>
        <taxon>Magnoliopsida</taxon>
        <taxon>eudicotyledons</taxon>
        <taxon>Gunneridae</taxon>
        <taxon>Pentapetalae</taxon>
        <taxon>Caryophyllales</taxon>
        <taxon>Amaranthaceae</taxon>
        <taxon>Amaranthus</taxon>
    </lineage>
</organism>
<keyword id="KW-0002">3D-structure</keyword>
<keyword id="KW-0022">Alpha-amylase inhibitor</keyword>
<keyword id="KW-0903">Direct protein sequencing</keyword>
<keyword id="KW-1015">Disulfide bond</keyword>
<keyword id="KW-0960">Knottin</keyword>
<gene>
    <name type="primary">AAI</name>
</gene>
<evidence type="ECO:0000269" key="1">
    <source>
    </source>
</evidence>
<evidence type="ECO:0007829" key="2">
    <source>
        <dbReference type="PDB" id="1CLV"/>
    </source>
</evidence>
<sequence>CIPKWNRCGPKMDGVPCCEPYTCTSDYYGNCS</sequence>
<protein>
    <recommendedName>
        <fullName>Alpha-amylase inhibitor AAI</fullName>
    </recommendedName>
</protein>